<comment type="miscellaneous">
    <text evidence="1">Almost completely overlaps MNP1.</text>
</comment>
<comment type="caution">
    <text evidence="2">Product of a dubious gene prediction unlikely to encode a functional protein. Because of that it is not part of the S.cerevisiae S288c complete/reference proteome set.</text>
</comment>
<proteinExistence type="uncertain"/>
<sequence length="154" mass="16084">MTLALVFVSNESNFTVNTVFASGLASSSAPLPASPVELGTLPAPAPAAPAMNPPIGMEISGMFNTVFSSLIKLEVSKRVNCEMSCTILEILGSTGLTSSLCDGAVVVVELKRVVIVIGEISAGVTRVFIQIEEDLFASIRKDILGAYLIDCVCC</sequence>
<name>YGG9_YEAST</name>
<organism>
    <name type="scientific">Saccharomyces cerevisiae (strain ATCC 204508 / S288c)</name>
    <name type="common">Baker's yeast</name>
    <dbReference type="NCBI Taxonomy" id="559292"/>
    <lineage>
        <taxon>Eukaryota</taxon>
        <taxon>Fungi</taxon>
        <taxon>Dikarya</taxon>
        <taxon>Ascomycota</taxon>
        <taxon>Saccharomycotina</taxon>
        <taxon>Saccharomycetes</taxon>
        <taxon>Saccharomycetales</taxon>
        <taxon>Saccharomycetaceae</taxon>
        <taxon>Saccharomyces</taxon>
    </lineage>
</organism>
<evidence type="ECO:0000305" key="1"/>
<evidence type="ECO:0000305" key="2">
    <source>
    </source>
</evidence>
<reference key="1">
    <citation type="journal article" date="1997" name="Yeast">
        <title>Sequence analysis of 203 kilobases from Saccharomyces cerevisiae chromosome VII.</title>
        <authorList>
            <person name="Rieger M."/>
            <person name="Brueckner M."/>
            <person name="Schaefer M."/>
            <person name="Mueller-Auer S."/>
        </authorList>
    </citation>
    <scope>NUCLEOTIDE SEQUENCE [GENOMIC DNA]</scope>
    <source>
        <strain>ATCC 204508 / S288c</strain>
    </source>
</reference>
<reference key="2">
    <citation type="journal article" date="1997" name="Nature">
        <title>The nucleotide sequence of Saccharomyces cerevisiae chromosome VII.</title>
        <authorList>
            <person name="Tettelin H."/>
            <person name="Agostoni-Carbone M.L."/>
            <person name="Albermann K."/>
            <person name="Albers M."/>
            <person name="Arroyo J."/>
            <person name="Backes U."/>
            <person name="Barreiros T."/>
            <person name="Bertani I."/>
            <person name="Bjourson A.J."/>
            <person name="Brueckner M."/>
            <person name="Bruschi C.V."/>
            <person name="Carignani G."/>
            <person name="Castagnoli L."/>
            <person name="Cerdan E."/>
            <person name="Clemente M.L."/>
            <person name="Coblenz A."/>
            <person name="Coglievina M."/>
            <person name="Coissac E."/>
            <person name="Defoor E."/>
            <person name="Del Bino S."/>
            <person name="Delius H."/>
            <person name="Delneri D."/>
            <person name="de Wergifosse P."/>
            <person name="Dujon B."/>
            <person name="Durand P."/>
            <person name="Entian K.-D."/>
            <person name="Eraso P."/>
            <person name="Escribano V."/>
            <person name="Fabiani L."/>
            <person name="Fartmann B."/>
            <person name="Feroli F."/>
            <person name="Feuermann M."/>
            <person name="Frontali L."/>
            <person name="Garcia-Gonzalez M."/>
            <person name="Garcia-Saez M.I."/>
            <person name="Goffeau A."/>
            <person name="Guerreiro P."/>
            <person name="Hani J."/>
            <person name="Hansen M."/>
            <person name="Hebling U."/>
            <person name="Hernandez K."/>
            <person name="Heumann K."/>
            <person name="Hilger F."/>
            <person name="Hofmann B."/>
            <person name="Indge K.J."/>
            <person name="James C.M."/>
            <person name="Klima R."/>
            <person name="Koetter P."/>
            <person name="Kramer B."/>
            <person name="Kramer W."/>
            <person name="Lauquin G."/>
            <person name="Leuther H."/>
            <person name="Louis E.J."/>
            <person name="Maillier E."/>
            <person name="Marconi A."/>
            <person name="Martegani E."/>
            <person name="Mazon M.J."/>
            <person name="Mazzoni C."/>
            <person name="McReynolds A.D.K."/>
            <person name="Melchioretto P."/>
            <person name="Mewes H.-W."/>
            <person name="Minenkova O."/>
            <person name="Mueller-Auer S."/>
            <person name="Nawrocki A."/>
            <person name="Netter P."/>
            <person name="Neu R."/>
            <person name="Nombela C."/>
            <person name="Oliver S.G."/>
            <person name="Panzeri L."/>
            <person name="Paoluzi S."/>
            <person name="Plevani P."/>
            <person name="Portetelle D."/>
            <person name="Portillo F."/>
            <person name="Potier S."/>
            <person name="Purnelle B."/>
            <person name="Rieger M."/>
            <person name="Riles L."/>
            <person name="Rinaldi T."/>
            <person name="Robben J."/>
            <person name="Rodrigues-Pousada C."/>
            <person name="Rodriguez-Belmonte E."/>
            <person name="Rodriguez-Torres A.M."/>
            <person name="Rose M."/>
            <person name="Ruzzi M."/>
            <person name="Saliola M."/>
            <person name="Sanchez-Perez M."/>
            <person name="Schaefer B."/>
            <person name="Schaefer M."/>
            <person name="Scharfe M."/>
            <person name="Schmidheini T."/>
            <person name="Schreer A."/>
            <person name="Skala J."/>
            <person name="Souciet J.-L."/>
            <person name="Steensma H.Y."/>
            <person name="Talla E."/>
            <person name="Thierry A."/>
            <person name="Vandenbol M."/>
            <person name="van der Aart Q.J.M."/>
            <person name="Van Dyck L."/>
            <person name="Vanoni M."/>
            <person name="Verhasselt P."/>
            <person name="Voet M."/>
            <person name="Volckaert G."/>
            <person name="Wambutt R."/>
            <person name="Watson M.D."/>
            <person name="Weber N."/>
            <person name="Wedler E."/>
            <person name="Wedler H."/>
            <person name="Wipfli P."/>
            <person name="Wolf K."/>
            <person name="Wright L.F."/>
            <person name="Zaccaria P."/>
            <person name="Zimmermann M."/>
            <person name="Zollner A."/>
            <person name="Kleine K."/>
        </authorList>
    </citation>
    <scope>NUCLEOTIDE SEQUENCE [LARGE SCALE GENOMIC DNA]</scope>
    <source>
        <strain>ATCC 204508 / S288c</strain>
    </source>
</reference>
<reference key="3">
    <citation type="journal article" date="2014" name="G3 (Bethesda)">
        <title>The reference genome sequence of Saccharomyces cerevisiae: Then and now.</title>
        <authorList>
            <person name="Engel S.R."/>
            <person name="Dietrich F.S."/>
            <person name="Fisk D.G."/>
            <person name="Binkley G."/>
            <person name="Balakrishnan R."/>
            <person name="Costanzo M.C."/>
            <person name="Dwight S.S."/>
            <person name="Hitz B.C."/>
            <person name="Karra K."/>
            <person name="Nash R.S."/>
            <person name="Weng S."/>
            <person name="Wong E.D."/>
            <person name="Lloyd P."/>
            <person name="Skrzypek M.S."/>
            <person name="Miyasato S.R."/>
            <person name="Simison M."/>
            <person name="Cherry J.M."/>
        </authorList>
    </citation>
    <scope>GENOME REANNOTATION</scope>
    <source>
        <strain>ATCC 204508 / S288c</strain>
    </source>
</reference>
<gene>
    <name type="ordered locus">YGL069C</name>
</gene>
<feature type="chain" id="PRO_0000202763" description="Putative uncharacterized protein YGL069C">
    <location>
        <begin position="1"/>
        <end position="154"/>
    </location>
</feature>
<accession>P53162</accession>
<protein>
    <recommendedName>
        <fullName>Putative uncharacterized protein YGL069C</fullName>
    </recommendedName>
</protein>
<dbReference type="EMBL" id="Z72591">
    <property type="protein sequence ID" value="CAA96772.1"/>
    <property type="molecule type" value="Genomic_DNA"/>
</dbReference>
<dbReference type="PIR" id="S64076">
    <property type="entry name" value="S64076"/>
</dbReference>
<dbReference type="DIP" id="DIP-5114N"/>
<dbReference type="IntAct" id="P53162">
    <property type="interactions" value="1"/>
</dbReference>
<dbReference type="PaxDb" id="4932-YGL069C"/>
<dbReference type="EnsemblFungi" id="YGL069C_mRNA">
    <property type="protein sequence ID" value="YGL069C"/>
    <property type="gene ID" value="YGL069C"/>
</dbReference>
<dbReference type="AGR" id="SGD:S000003037"/>
<dbReference type="SGD" id="S000003037">
    <property type="gene designation" value="YGL069C"/>
</dbReference>
<dbReference type="HOGENOM" id="CLU_1705640_0_0_1"/>